<dbReference type="EC" id="2.6.1.9" evidence="1"/>
<dbReference type="EMBL" id="AE017262">
    <property type="protein sequence ID" value="AAT04724.1"/>
    <property type="molecule type" value="Genomic_DNA"/>
</dbReference>
<dbReference type="RefSeq" id="WP_003726521.1">
    <property type="nucleotide sequence ID" value="NC_002973.6"/>
</dbReference>
<dbReference type="SMR" id="Q71Y90"/>
<dbReference type="KEGG" id="lmf:LMOf2365_1954"/>
<dbReference type="HOGENOM" id="CLU_017584_3_3_9"/>
<dbReference type="UniPathway" id="UPA00031">
    <property type="reaction ID" value="UER00012"/>
</dbReference>
<dbReference type="GO" id="GO:0004400">
    <property type="term" value="F:histidinol-phosphate transaminase activity"/>
    <property type="evidence" value="ECO:0007669"/>
    <property type="project" value="UniProtKB-UniRule"/>
</dbReference>
<dbReference type="GO" id="GO:0030170">
    <property type="term" value="F:pyridoxal phosphate binding"/>
    <property type="evidence" value="ECO:0007669"/>
    <property type="project" value="InterPro"/>
</dbReference>
<dbReference type="GO" id="GO:0000105">
    <property type="term" value="P:L-histidine biosynthetic process"/>
    <property type="evidence" value="ECO:0007669"/>
    <property type="project" value="UniProtKB-UniRule"/>
</dbReference>
<dbReference type="CDD" id="cd00609">
    <property type="entry name" value="AAT_like"/>
    <property type="match status" value="1"/>
</dbReference>
<dbReference type="Gene3D" id="3.90.1150.10">
    <property type="entry name" value="Aspartate Aminotransferase, domain 1"/>
    <property type="match status" value="1"/>
</dbReference>
<dbReference type="Gene3D" id="3.40.640.10">
    <property type="entry name" value="Type I PLP-dependent aspartate aminotransferase-like (Major domain)"/>
    <property type="match status" value="1"/>
</dbReference>
<dbReference type="HAMAP" id="MF_01023">
    <property type="entry name" value="HisC_aminotrans_2"/>
    <property type="match status" value="1"/>
</dbReference>
<dbReference type="InterPro" id="IPR004839">
    <property type="entry name" value="Aminotransferase_I/II_large"/>
</dbReference>
<dbReference type="InterPro" id="IPR005861">
    <property type="entry name" value="HisP_aminotrans"/>
</dbReference>
<dbReference type="InterPro" id="IPR050106">
    <property type="entry name" value="HistidinolP_aminotransfase"/>
</dbReference>
<dbReference type="InterPro" id="IPR015424">
    <property type="entry name" value="PyrdxlP-dep_Trfase"/>
</dbReference>
<dbReference type="InterPro" id="IPR015421">
    <property type="entry name" value="PyrdxlP-dep_Trfase_major"/>
</dbReference>
<dbReference type="InterPro" id="IPR015422">
    <property type="entry name" value="PyrdxlP-dep_Trfase_small"/>
</dbReference>
<dbReference type="NCBIfam" id="TIGR01141">
    <property type="entry name" value="hisC"/>
    <property type="match status" value="1"/>
</dbReference>
<dbReference type="PANTHER" id="PTHR43643:SF3">
    <property type="entry name" value="HISTIDINOL-PHOSPHATE AMINOTRANSFERASE"/>
    <property type="match status" value="1"/>
</dbReference>
<dbReference type="PANTHER" id="PTHR43643">
    <property type="entry name" value="HISTIDINOL-PHOSPHATE AMINOTRANSFERASE 2"/>
    <property type="match status" value="1"/>
</dbReference>
<dbReference type="Pfam" id="PF00155">
    <property type="entry name" value="Aminotran_1_2"/>
    <property type="match status" value="1"/>
</dbReference>
<dbReference type="SUPFAM" id="SSF53383">
    <property type="entry name" value="PLP-dependent transferases"/>
    <property type="match status" value="1"/>
</dbReference>
<comment type="catalytic activity">
    <reaction evidence="1">
        <text>L-histidinol phosphate + 2-oxoglutarate = 3-(imidazol-4-yl)-2-oxopropyl phosphate + L-glutamate</text>
        <dbReference type="Rhea" id="RHEA:23744"/>
        <dbReference type="ChEBI" id="CHEBI:16810"/>
        <dbReference type="ChEBI" id="CHEBI:29985"/>
        <dbReference type="ChEBI" id="CHEBI:57766"/>
        <dbReference type="ChEBI" id="CHEBI:57980"/>
        <dbReference type="EC" id="2.6.1.9"/>
    </reaction>
</comment>
<comment type="cofactor">
    <cofactor evidence="1">
        <name>pyridoxal 5'-phosphate</name>
        <dbReference type="ChEBI" id="CHEBI:597326"/>
    </cofactor>
</comment>
<comment type="pathway">
    <text evidence="1">Amino-acid biosynthesis; L-histidine biosynthesis; L-histidine from 5-phospho-alpha-D-ribose 1-diphosphate: step 7/9.</text>
</comment>
<comment type="subunit">
    <text evidence="1">Homodimer.</text>
</comment>
<comment type="similarity">
    <text evidence="1">Belongs to the class-II pyridoxal-phosphate-dependent aminotransferase family. Histidinol-phosphate aminotransferase subfamily.</text>
</comment>
<gene>
    <name evidence="1" type="primary">hisC</name>
    <name type="ordered locus">LMOf2365_1954</name>
</gene>
<protein>
    <recommendedName>
        <fullName evidence="1">Histidinol-phosphate aminotransferase</fullName>
        <ecNumber evidence="1">2.6.1.9</ecNumber>
    </recommendedName>
    <alternativeName>
        <fullName evidence="1">Imidazole acetol-phosphate transaminase</fullName>
    </alternativeName>
</protein>
<keyword id="KW-0028">Amino-acid biosynthesis</keyword>
<keyword id="KW-0032">Aminotransferase</keyword>
<keyword id="KW-0368">Histidine biosynthesis</keyword>
<keyword id="KW-0663">Pyridoxal phosphate</keyword>
<keyword id="KW-0808">Transferase</keyword>
<reference key="1">
    <citation type="journal article" date="2004" name="Nucleic Acids Res.">
        <title>Whole genome comparisons of serotype 4b and 1/2a strains of the food-borne pathogen Listeria monocytogenes reveal new insights into the core genome components of this species.</title>
        <authorList>
            <person name="Nelson K.E."/>
            <person name="Fouts D.E."/>
            <person name="Mongodin E.F."/>
            <person name="Ravel J."/>
            <person name="DeBoy R.T."/>
            <person name="Kolonay J.F."/>
            <person name="Rasko D.A."/>
            <person name="Angiuoli S.V."/>
            <person name="Gill S.R."/>
            <person name="Paulsen I.T."/>
            <person name="Peterson J.D."/>
            <person name="White O."/>
            <person name="Nelson W.C."/>
            <person name="Nierman W.C."/>
            <person name="Beanan M.J."/>
            <person name="Brinkac L.M."/>
            <person name="Daugherty S.C."/>
            <person name="Dodson R.J."/>
            <person name="Durkin A.S."/>
            <person name="Madupu R."/>
            <person name="Haft D.H."/>
            <person name="Selengut J."/>
            <person name="Van Aken S.E."/>
            <person name="Khouri H.M."/>
            <person name="Fedorova N."/>
            <person name="Forberger H.A."/>
            <person name="Tran B."/>
            <person name="Kathariou S."/>
            <person name="Wonderling L.D."/>
            <person name="Uhlich G.A."/>
            <person name="Bayles D.O."/>
            <person name="Luchansky J.B."/>
            <person name="Fraser C.M."/>
        </authorList>
    </citation>
    <scope>NUCLEOTIDE SEQUENCE [LARGE SCALE GENOMIC DNA]</scope>
    <source>
        <strain>F2365</strain>
    </source>
</reference>
<proteinExistence type="inferred from homology"/>
<name>HIS8_LISMF</name>
<sequence length="360" mass="39862">MKWKKSLTGLSSYKPGKREEEVMAELGLTKITKLSSNENPLGTSPKVAELQANSSVETEIYPDGWASSLRTVVADFYQLEEEELIFTAGVDELIELLTRVLLDTTKNTVMATPTFVQYRQNALIEGAEVREIPLLVDGAHDLDGMLNAIDDNTTIVWVCNPNNPTGNYIDLADIQAFLDKVPSDVLVVLDEAYIEYVTPQPEKHEKLIRTYKNLIITRTFSKIYGLASARVGYGIADKAIIEQLNIVRPPFNTTSIGQKLAIEAIKDQAFIEACRTSNANGIKQYEAFAKRFEQVKLYPANGNFVLIDLGIEAGTIFSYLEKNGYITRSGAALGFPTAVRITIGKEEENSAVIALLEKLL</sequence>
<accession>Q71Y90</accession>
<evidence type="ECO:0000255" key="1">
    <source>
        <dbReference type="HAMAP-Rule" id="MF_01023"/>
    </source>
</evidence>
<organism>
    <name type="scientific">Listeria monocytogenes serotype 4b (strain F2365)</name>
    <dbReference type="NCBI Taxonomy" id="265669"/>
    <lineage>
        <taxon>Bacteria</taxon>
        <taxon>Bacillati</taxon>
        <taxon>Bacillota</taxon>
        <taxon>Bacilli</taxon>
        <taxon>Bacillales</taxon>
        <taxon>Listeriaceae</taxon>
        <taxon>Listeria</taxon>
    </lineage>
</organism>
<feature type="chain" id="PRO_0000153387" description="Histidinol-phosphate aminotransferase">
    <location>
        <begin position="1"/>
        <end position="360"/>
    </location>
</feature>
<feature type="modified residue" description="N6-(pyridoxal phosphate)lysine" evidence="1">
    <location>
        <position position="222"/>
    </location>
</feature>